<protein>
    <recommendedName>
        <fullName evidence="1">Probable cytosol aminopeptidase</fullName>
        <ecNumber evidence="1">3.4.11.1</ecNumber>
    </recommendedName>
    <alternativeName>
        <fullName evidence="1">Leucine aminopeptidase</fullName>
        <shortName evidence="1">LAP</shortName>
        <ecNumber evidence="1">3.4.11.10</ecNumber>
    </alternativeName>
    <alternativeName>
        <fullName evidence="1">Leucyl aminopeptidase</fullName>
    </alternativeName>
</protein>
<keyword id="KW-0031">Aminopeptidase</keyword>
<keyword id="KW-0963">Cytoplasm</keyword>
<keyword id="KW-0378">Hydrolase</keyword>
<keyword id="KW-0464">Manganese</keyword>
<keyword id="KW-0479">Metal-binding</keyword>
<keyword id="KW-0645">Protease</keyword>
<keyword id="KW-1185">Reference proteome</keyword>
<dbReference type="EC" id="3.4.11.1" evidence="1"/>
<dbReference type="EC" id="3.4.11.10" evidence="1"/>
<dbReference type="EMBL" id="CR378664">
    <property type="protein sequence ID" value="CAG18915.1"/>
    <property type="molecule type" value="Genomic_DNA"/>
</dbReference>
<dbReference type="RefSeq" id="WP_011217271.1">
    <property type="nucleotide sequence ID" value="NC_006370.1"/>
</dbReference>
<dbReference type="SMR" id="Q6LUW0"/>
<dbReference type="STRING" id="298386.PBPRA0484"/>
<dbReference type="MEROPS" id="M17.003"/>
<dbReference type="KEGG" id="ppr:PBPRA0484"/>
<dbReference type="eggNOG" id="COG0260">
    <property type="taxonomic scope" value="Bacteria"/>
</dbReference>
<dbReference type="HOGENOM" id="CLU_013734_2_2_6"/>
<dbReference type="Proteomes" id="UP000000593">
    <property type="component" value="Chromosome 1"/>
</dbReference>
<dbReference type="GO" id="GO:0005737">
    <property type="term" value="C:cytoplasm"/>
    <property type="evidence" value="ECO:0007669"/>
    <property type="project" value="UniProtKB-SubCell"/>
</dbReference>
<dbReference type="GO" id="GO:0030145">
    <property type="term" value="F:manganese ion binding"/>
    <property type="evidence" value="ECO:0007669"/>
    <property type="project" value="UniProtKB-UniRule"/>
</dbReference>
<dbReference type="GO" id="GO:0070006">
    <property type="term" value="F:metalloaminopeptidase activity"/>
    <property type="evidence" value="ECO:0007669"/>
    <property type="project" value="InterPro"/>
</dbReference>
<dbReference type="GO" id="GO:0006508">
    <property type="term" value="P:proteolysis"/>
    <property type="evidence" value="ECO:0007669"/>
    <property type="project" value="UniProtKB-KW"/>
</dbReference>
<dbReference type="CDD" id="cd00433">
    <property type="entry name" value="Peptidase_M17"/>
    <property type="match status" value="1"/>
</dbReference>
<dbReference type="FunFam" id="3.40.220.10:FF:000001">
    <property type="entry name" value="Probable cytosol aminopeptidase"/>
    <property type="match status" value="1"/>
</dbReference>
<dbReference type="FunFam" id="3.40.630.10:FF:000004">
    <property type="entry name" value="Probable cytosol aminopeptidase"/>
    <property type="match status" value="1"/>
</dbReference>
<dbReference type="Gene3D" id="3.40.220.10">
    <property type="entry name" value="Leucine Aminopeptidase, subunit E, domain 1"/>
    <property type="match status" value="1"/>
</dbReference>
<dbReference type="Gene3D" id="3.40.630.10">
    <property type="entry name" value="Zn peptidases"/>
    <property type="match status" value="1"/>
</dbReference>
<dbReference type="HAMAP" id="MF_00181">
    <property type="entry name" value="Cytosol_peptidase_M17"/>
    <property type="match status" value="1"/>
</dbReference>
<dbReference type="InterPro" id="IPR011356">
    <property type="entry name" value="Leucine_aapep/pepB"/>
</dbReference>
<dbReference type="InterPro" id="IPR043472">
    <property type="entry name" value="Macro_dom-like"/>
</dbReference>
<dbReference type="InterPro" id="IPR000819">
    <property type="entry name" value="Peptidase_M17_C"/>
</dbReference>
<dbReference type="InterPro" id="IPR023042">
    <property type="entry name" value="Peptidase_M17_leu_NH2_pept"/>
</dbReference>
<dbReference type="InterPro" id="IPR008283">
    <property type="entry name" value="Peptidase_M17_N"/>
</dbReference>
<dbReference type="NCBIfam" id="NF002072">
    <property type="entry name" value="PRK00913.1-1"/>
    <property type="match status" value="1"/>
</dbReference>
<dbReference type="NCBIfam" id="NF002074">
    <property type="entry name" value="PRK00913.1-4"/>
    <property type="match status" value="1"/>
</dbReference>
<dbReference type="PANTHER" id="PTHR11963:SF23">
    <property type="entry name" value="CYTOSOL AMINOPEPTIDASE"/>
    <property type="match status" value="1"/>
</dbReference>
<dbReference type="PANTHER" id="PTHR11963">
    <property type="entry name" value="LEUCINE AMINOPEPTIDASE-RELATED"/>
    <property type="match status" value="1"/>
</dbReference>
<dbReference type="Pfam" id="PF00883">
    <property type="entry name" value="Peptidase_M17"/>
    <property type="match status" value="1"/>
</dbReference>
<dbReference type="Pfam" id="PF02789">
    <property type="entry name" value="Peptidase_M17_N"/>
    <property type="match status" value="1"/>
</dbReference>
<dbReference type="PRINTS" id="PR00481">
    <property type="entry name" value="LAMNOPPTDASE"/>
</dbReference>
<dbReference type="SUPFAM" id="SSF52949">
    <property type="entry name" value="Macro domain-like"/>
    <property type="match status" value="1"/>
</dbReference>
<dbReference type="SUPFAM" id="SSF53187">
    <property type="entry name" value="Zn-dependent exopeptidases"/>
    <property type="match status" value="1"/>
</dbReference>
<dbReference type="PROSITE" id="PS00631">
    <property type="entry name" value="CYTOSOL_AP"/>
    <property type="match status" value="1"/>
</dbReference>
<accession>Q6LUW0</accession>
<reference key="1">
    <citation type="journal article" date="2005" name="Science">
        <title>Life at depth: Photobacterium profundum genome sequence and expression analysis.</title>
        <authorList>
            <person name="Vezzi A."/>
            <person name="Campanaro S."/>
            <person name="D'Angelo M."/>
            <person name="Simonato F."/>
            <person name="Vitulo N."/>
            <person name="Lauro F.M."/>
            <person name="Cestaro A."/>
            <person name="Malacrida G."/>
            <person name="Simionati B."/>
            <person name="Cannata N."/>
            <person name="Romualdi C."/>
            <person name="Bartlett D.H."/>
            <person name="Valle G."/>
        </authorList>
    </citation>
    <scope>NUCLEOTIDE SEQUENCE [LARGE SCALE GENOMIC DNA]</scope>
    <source>
        <strain>ATCC BAA-1253 / SS9</strain>
    </source>
</reference>
<gene>
    <name evidence="1" type="primary">pepA</name>
    <name type="ordered locus">PBPRA0484</name>
</gene>
<proteinExistence type="inferred from homology"/>
<comment type="function">
    <text evidence="1">Presumably involved in the processing and regular turnover of intracellular proteins. Catalyzes the removal of unsubstituted N-terminal amino acids from various peptides.</text>
</comment>
<comment type="catalytic activity">
    <reaction evidence="1">
        <text>Release of an N-terminal amino acid, Xaa-|-Yaa-, in which Xaa is preferably Leu, but may be other amino acids including Pro although not Arg or Lys, and Yaa may be Pro. Amino acid amides and methyl esters are also readily hydrolyzed, but rates on arylamides are exceedingly low.</text>
        <dbReference type="EC" id="3.4.11.1"/>
    </reaction>
</comment>
<comment type="catalytic activity">
    <reaction evidence="1">
        <text>Release of an N-terminal amino acid, preferentially leucine, but not glutamic or aspartic acids.</text>
        <dbReference type="EC" id="3.4.11.10"/>
    </reaction>
</comment>
<comment type="cofactor">
    <cofactor evidence="1">
        <name>Mn(2+)</name>
        <dbReference type="ChEBI" id="CHEBI:29035"/>
    </cofactor>
    <text evidence="1">Binds 2 manganese ions per subunit.</text>
</comment>
<comment type="subcellular location">
    <subcellularLocation>
        <location evidence="1">Cytoplasm</location>
    </subcellularLocation>
</comment>
<comment type="similarity">
    <text evidence="1">Belongs to the peptidase M17 family.</text>
</comment>
<name>AMPA_PHOPR</name>
<organism>
    <name type="scientific">Photobacterium profundum (strain SS9)</name>
    <dbReference type="NCBI Taxonomy" id="298386"/>
    <lineage>
        <taxon>Bacteria</taxon>
        <taxon>Pseudomonadati</taxon>
        <taxon>Pseudomonadota</taxon>
        <taxon>Gammaproteobacteria</taxon>
        <taxon>Vibrionales</taxon>
        <taxon>Vibrionaceae</taxon>
        <taxon>Photobacterium</taxon>
    </lineage>
</organism>
<evidence type="ECO:0000255" key="1">
    <source>
        <dbReference type="HAMAP-Rule" id="MF_00181"/>
    </source>
</evidence>
<sequence length="502" mass="54481">MEFSVKSGSPEKQRSACIVVGVFEPRRLSPIAEQLDKISDGYISSLLRRGDLEGKPGQMLLLHHVPNVLSERVLLVGCGKERELDERQYKQIIKKTISTLNETGSMEAVCFLTELHVKGRDTYWKVRQAVETTKDSLYTFNQFKSNKPETRRPLRKLVFNVPTRRELSLGERAITHGLAVASGVKASKDLGNMPPNVANPAYLASQARRLADDFDTVTTKIIGEQEMKELGMTSYLAVGQGSKNEAMMSVIEYKGSADPDAKPIVLIGKGLTFDSGGISIKPSAQMDEMKYDMCGAASVFGAMKSLAQLNLPINVVGVIAGCENMPGGNAYRPGDIITTMSGKTVEVLNTDAEGRLVLCDALTYVERFDPDCVVDVATLTGACVVALGHHISGLLGNHNPLAHELINASEQSGDRAWRLPMSDEYQDQISSPFADMANLGSPGAGTITAGCFLSRFTKKYNWAHLDIAGTAWVGGKEKGSTGRPVPLLVQFLLNRAGLENVE</sequence>
<feature type="chain" id="PRO_0000165777" description="Probable cytosol aminopeptidase">
    <location>
        <begin position="1"/>
        <end position="502"/>
    </location>
</feature>
<feature type="active site" evidence="1">
    <location>
        <position position="281"/>
    </location>
</feature>
<feature type="active site" evidence="1">
    <location>
        <position position="355"/>
    </location>
</feature>
<feature type="binding site" evidence="1">
    <location>
        <position position="269"/>
    </location>
    <ligand>
        <name>Mn(2+)</name>
        <dbReference type="ChEBI" id="CHEBI:29035"/>
        <label>2</label>
    </ligand>
</feature>
<feature type="binding site" evidence="1">
    <location>
        <position position="274"/>
    </location>
    <ligand>
        <name>Mn(2+)</name>
        <dbReference type="ChEBI" id="CHEBI:29035"/>
        <label>1</label>
    </ligand>
</feature>
<feature type="binding site" evidence="1">
    <location>
        <position position="274"/>
    </location>
    <ligand>
        <name>Mn(2+)</name>
        <dbReference type="ChEBI" id="CHEBI:29035"/>
        <label>2</label>
    </ligand>
</feature>
<feature type="binding site" evidence="1">
    <location>
        <position position="292"/>
    </location>
    <ligand>
        <name>Mn(2+)</name>
        <dbReference type="ChEBI" id="CHEBI:29035"/>
        <label>2</label>
    </ligand>
</feature>
<feature type="binding site" evidence="1">
    <location>
        <position position="351"/>
    </location>
    <ligand>
        <name>Mn(2+)</name>
        <dbReference type="ChEBI" id="CHEBI:29035"/>
        <label>1</label>
    </ligand>
</feature>
<feature type="binding site" evidence="1">
    <location>
        <position position="353"/>
    </location>
    <ligand>
        <name>Mn(2+)</name>
        <dbReference type="ChEBI" id="CHEBI:29035"/>
        <label>1</label>
    </ligand>
</feature>
<feature type="binding site" evidence="1">
    <location>
        <position position="353"/>
    </location>
    <ligand>
        <name>Mn(2+)</name>
        <dbReference type="ChEBI" id="CHEBI:29035"/>
        <label>2</label>
    </ligand>
</feature>